<sequence length="431" mass="48446">MVSLEKNDRVMLARQLPLKSVALILAGGRGTRLKDLTNKRAKPAVHFGGKFRIIDFALSNCLNSGIRRIGVITQYQSHTLVQHIQRGWSLFSEEMNEFVDLLPAQQRMKGENWYRGTADAVTQNLDIIRRYKAEYVVILAGDHIYKQDYSRMLIDHVEKGARCTVACMPVPIKEATAFGVMAVDESDKIIDFVEKPANPPAMPGDASKALASMGIYVFDADYLYELLAADDKDDASSHDFGKDIIPKITREGMAYAHPFPLSCVQSDPQAEPYWRDVGTLEAYWKANLDLASVTPELDMYDQNWPIRTHMESLPPAKFVQDRSGSHGMTLNSLVSGGCIISGSVVVQSVLFPRVRINSFCNIDSAVLLPEVWVGRSCRLRRCVIDRACIIPEGMVIGENAEEDARRFYRSEEGIVLVTREMLRKLQVKQER</sequence>
<protein>
    <recommendedName>
        <fullName evidence="1">Glucose-1-phosphate adenylyltransferase</fullName>
        <ecNumber evidence="1">2.7.7.27</ecNumber>
    </recommendedName>
    <alternativeName>
        <fullName evidence="1">ADP-glucose pyrophosphorylase</fullName>
        <shortName evidence="1">ADPGlc PPase</shortName>
    </alternativeName>
    <alternativeName>
        <fullName evidence="1">ADP-glucose synthase</fullName>
    </alternativeName>
</protein>
<comment type="function">
    <text evidence="1">Involved in the biosynthesis of ADP-glucose, a building block required for the elongation reactions to produce glycogen. Catalyzes the reaction between ATP and alpha-D-glucose 1-phosphate (G1P) to produce pyrophosphate and ADP-Glc.</text>
</comment>
<comment type="catalytic activity">
    <reaction evidence="1">
        <text>alpha-D-glucose 1-phosphate + ATP + H(+) = ADP-alpha-D-glucose + diphosphate</text>
        <dbReference type="Rhea" id="RHEA:12120"/>
        <dbReference type="ChEBI" id="CHEBI:15378"/>
        <dbReference type="ChEBI" id="CHEBI:30616"/>
        <dbReference type="ChEBI" id="CHEBI:33019"/>
        <dbReference type="ChEBI" id="CHEBI:57498"/>
        <dbReference type="ChEBI" id="CHEBI:58601"/>
        <dbReference type="EC" id="2.7.7.27"/>
    </reaction>
</comment>
<comment type="activity regulation">
    <text evidence="1">Allosterically activated by fructose-1,6-bisphosphate (F16BP) and inhibited by AMP.</text>
</comment>
<comment type="pathway">
    <text evidence="1">Glycan biosynthesis; glycogen biosynthesis.</text>
</comment>
<comment type="subunit">
    <text evidence="1">Homotetramer.</text>
</comment>
<comment type="similarity">
    <text evidence="1">Belongs to the bacterial/plant glucose-1-phosphate adenylyltransferase family.</text>
</comment>
<dbReference type="EC" id="2.7.7.27" evidence="1"/>
<dbReference type="EMBL" id="AE017220">
    <property type="protein sequence ID" value="AAX67372.1"/>
    <property type="molecule type" value="Genomic_DNA"/>
</dbReference>
<dbReference type="RefSeq" id="WP_000253994.1">
    <property type="nucleotide sequence ID" value="NC_006905.1"/>
</dbReference>
<dbReference type="SMR" id="Q57IU0"/>
<dbReference type="KEGG" id="sec:SCH_3466"/>
<dbReference type="HOGENOM" id="CLU_029499_14_1_6"/>
<dbReference type="UniPathway" id="UPA00164"/>
<dbReference type="Proteomes" id="UP000000538">
    <property type="component" value="Chromosome"/>
</dbReference>
<dbReference type="GO" id="GO:0005524">
    <property type="term" value="F:ATP binding"/>
    <property type="evidence" value="ECO:0007669"/>
    <property type="project" value="UniProtKB-KW"/>
</dbReference>
<dbReference type="GO" id="GO:0008878">
    <property type="term" value="F:glucose-1-phosphate adenylyltransferase activity"/>
    <property type="evidence" value="ECO:0007669"/>
    <property type="project" value="UniProtKB-UniRule"/>
</dbReference>
<dbReference type="GO" id="GO:0005978">
    <property type="term" value="P:glycogen biosynthetic process"/>
    <property type="evidence" value="ECO:0007669"/>
    <property type="project" value="UniProtKB-UniRule"/>
</dbReference>
<dbReference type="CDD" id="cd02508">
    <property type="entry name" value="ADP_Glucose_PP"/>
    <property type="match status" value="1"/>
</dbReference>
<dbReference type="CDD" id="cd04651">
    <property type="entry name" value="LbH_G1P_AT_C"/>
    <property type="match status" value="1"/>
</dbReference>
<dbReference type="FunFam" id="2.160.10.10:FF:000006">
    <property type="entry name" value="Glucose-1-phosphate adenylyltransferase"/>
    <property type="match status" value="1"/>
</dbReference>
<dbReference type="FunFam" id="3.90.550.10:FF:000014">
    <property type="entry name" value="Glucose-1-phosphate adenylyltransferase"/>
    <property type="match status" value="1"/>
</dbReference>
<dbReference type="Gene3D" id="2.160.10.10">
    <property type="entry name" value="Hexapeptide repeat proteins"/>
    <property type="match status" value="1"/>
</dbReference>
<dbReference type="Gene3D" id="3.90.550.10">
    <property type="entry name" value="Spore Coat Polysaccharide Biosynthesis Protein SpsA, Chain A"/>
    <property type="match status" value="1"/>
</dbReference>
<dbReference type="HAMAP" id="MF_00624">
    <property type="entry name" value="GlgC"/>
    <property type="match status" value="1"/>
</dbReference>
<dbReference type="InterPro" id="IPR011831">
    <property type="entry name" value="ADP-Glc_PPase"/>
</dbReference>
<dbReference type="InterPro" id="IPR005836">
    <property type="entry name" value="ADP_Glu_pyroP_CS"/>
</dbReference>
<dbReference type="InterPro" id="IPR023049">
    <property type="entry name" value="GlgC_bac"/>
</dbReference>
<dbReference type="InterPro" id="IPR056818">
    <property type="entry name" value="GlmU/GlgC-like_hexapep"/>
</dbReference>
<dbReference type="InterPro" id="IPR005835">
    <property type="entry name" value="NTP_transferase_dom"/>
</dbReference>
<dbReference type="InterPro" id="IPR029044">
    <property type="entry name" value="Nucleotide-diphossugar_trans"/>
</dbReference>
<dbReference type="InterPro" id="IPR011004">
    <property type="entry name" value="Trimer_LpxA-like_sf"/>
</dbReference>
<dbReference type="NCBIfam" id="TIGR02091">
    <property type="entry name" value="glgC"/>
    <property type="match status" value="1"/>
</dbReference>
<dbReference type="NCBIfam" id="NF001947">
    <property type="entry name" value="PRK00725.1"/>
    <property type="match status" value="1"/>
</dbReference>
<dbReference type="NCBIfam" id="NF002023">
    <property type="entry name" value="PRK00844.1"/>
    <property type="match status" value="1"/>
</dbReference>
<dbReference type="PANTHER" id="PTHR43523:SF2">
    <property type="entry name" value="GLUCOSE-1-PHOSPHATE ADENYLYLTRANSFERASE"/>
    <property type="match status" value="1"/>
</dbReference>
<dbReference type="PANTHER" id="PTHR43523">
    <property type="entry name" value="GLUCOSE-1-PHOSPHATE ADENYLYLTRANSFERASE-RELATED"/>
    <property type="match status" value="1"/>
</dbReference>
<dbReference type="Pfam" id="PF24894">
    <property type="entry name" value="Hexapep_GlmU"/>
    <property type="match status" value="1"/>
</dbReference>
<dbReference type="Pfam" id="PF00483">
    <property type="entry name" value="NTP_transferase"/>
    <property type="match status" value="1"/>
</dbReference>
<dbReference type="SUPFAM" id="SSF53448">
    <property type="entry name" value="Nucleotide-diphospho-sugar transferases"/>
    <property type="match status" value="1"/>
</dbReference>
<dbReference type="SUPFAM" id="SSF51161">
    <property type="entry name" value="Trimeric LpxA-like enzymes"/>
    <property type="match status" value="1"/>
</dbReference>
<dbReference type="PROSITE" id="PS00808">
    <property type="entry name" value="ADP_GLC_PYROPHOSPH_1"/>
    <property type="match status" value="1"/>
</dbReference>
<dbReference type="PROSITE" id="PS00809">
    <property type="entry name" value="ADP_GLC_PYROPHOSPH_2"/>
    <property type="match status" value="1"/>
</dbReference>
<dbReference type="PROSITE" id="PS00810">
    <property type="entry name" value="ADP_GLC_PYROPHOSPH_3"/>
    <property type="match status" value="1"/>
</dbReference>
<keyword id="KW-0021">Allosteric enzyme</keyword>
<keyword id="KW-0067">ATP-binding</keyword>
<keyword id="KW-0119">Carbohydrate metabolism</keyword>
<keyword id="KW-0320">Glycogen biosynthesis</keyword>
<keyword id="KW-0321">Glycogen metabolism</keyword>
<keyword id="KW-0547">Nucleotide-binding</keyword>
<keyword id="KW-0548">Nucleotidyltransferase</keyword>
<keyword id="KW-0808">Transferase</keyword>
<accession>Q57IU0</accession>
<gene>
    <name evidence="1" type="primary">glgC</name>
    <name type="ordered locus">SCH_3466</name>
</gene>
<organism>
    <name type="scientific">Salmonella choleraesuis (strain SC-B67)</name>
    <dbReference type="NCBI Taxonomy" id="321314"/>
    <lineage>
        <taxon>Bacteria</taxon>
        <taxon>Pseudomonadati</taxon>
        <taxon>Pseudomonadota</taxon>
        <taxon>Gammaproteobacteria</taxon>
        <taxon>Enterobacterales</taxon>
        <taxon>Enterobacteriaceae</taxon>
        <taxon>Salmonella</taxon>
    </lineage>
</organism>
<evidence type="ECO:0000255" key="1">
    <source>
        <dbReference type="HAMAP-Rule" id="MF_00624"/>
    </source>
</evidence>
<feature type="chain" id="PRO_0000195324" description="Glucose-1-phosphate adenylyltransferase">
    <location>
        <begin position="1"/>
        <end position="431"/>
    </location>
</feature>
<feature type="binding site" evidence="1">
    <location>
        <position position="39"/>
    </location>
    <ligand>
        <name>beta-D-fructose 1,6-bisphosphate</name>
        <dbReference type="ChEBI" id="CHEBI:32966"/>
    </ligand>
</feature>
<feature type="binding site" evidence="1">
    <location>
        <position position="40"/>
    </location>
    <ligand>
        <name>AMP</name>
        <dbReference type="ChEBI" id="CHEBI:456215"/>
    </ligand>
</feature>
<feature type="binding site" evidence="1">
    <location>
        <position position="46"/>
    </location>
    <ligand>
        <name>AMP</name>
        <dbReference type="ChEBI" id="CHEBI:456215"/>
    </ligand>
</feature>
<feature type="binding site" evidence="1">
    <location>
        <position position="52"/>
    </location>
    <ligand>
        <name>AMP</name>
        <dbReference type="ChEBI" id="CHEBI:456215"/>
    </ligand>
</feature>
<feature type="binding site" evidence="1">
    <location>
        <position position="114"/>
    </location>
    <ligand>
        <name>alpha-D-glucose 1-phosphate</name>
        <dbReference type="ChEBI" id="CHEBI:58601"/>
    </ligand>
</feature>
<feature type="binding site" evidence="1">
    <location>
        <position position="130"/>
    </location>
    <ligand>
        <name>AMP</name>
        <dbReference type="ChEBI" id="CHEBI:456215"/>
    </ligand>
</feature>
<feature type="binding site" evidence="1">
    <location>
        <position position="179"/>
    </location>
    <ligand>
        <name>alpha-D-glucose 1-phosphate</name>
        <dbReference type="ChEBI" id="CHEBI:58601"/>
    </ligand>
</feature>
<feature type="binding site" evidence="1">
    <location>
        <begin position="194"/>
        <end position="195"/>
    </location>
    <ligand>
        <name>alpha-D-glucose 1-phosphate</name>
        <dbReference type="ChEBI" id="CHEBI:58601"/>
    </ligand>
</feature>
<feature type="binding site" evidence="1">
    <location>
        <position position="212"/>
    </location>
    <ligand>
        <name>alpha-D-glucose 1-phosphate</name>
        <dbReference type="ChEBI" id="CHEBI:58601"/>
    </ligand>
</feature>
<feature type="binding site" evidence="1">
    <location>
        <position position="370"/>
    </location>
    <ligand>
        <name>AMP</name>
        <dbReference type="ChEBI" id="CHEBI:456215"/>
    </ligand>
</feature>
<feature type="binding site" evidence="1">
    <location>
        <position position="386"/>
    </location>
    <ligand>
        <name>AMP</name>
        <dbReference type="ChEBI" id="CHEBI:456215"/>
    </ligand>
</feature>
<feature type="binding site" evidence="1">
    <location>
        <begin position="419"/>
        <end position="423"/>
    </location>
    <ligand>
        <name>beta-D-fructose 1,6-bisphosphate</name>
        <dbReference type="ChEBI" id="CHEBI:32966"/>
    </ligand>
</feature>
<feature type="binding site" evidence="1">
    <location>
        <begin position="429"/>
        <end position="431"/>
    </location>
    <ligand>
        <name>beta-D-fructose 1,6-bisphosphate</name>
        <dbReference type="ChEBI" id="CHEBI:32966"/>
    </ligand>
</feature>
<feature type="site" description="Could play a key role in the communication between the regulatory and the substrate sites" evidence="1">
    <location>
        <position position="74"/>
    </location>
</feature>
<feature type="site" description="Could play a key role in the communication between the regulatory and the substrate sites" evidence="1">
    <location>
        <position position="113"/>
    </location>
</feature>
<proteinExistence type="inferred from homology"/>
<name>GLGC_SALCH</name>
<reference key="1">
    <citation type="journal article" date="2005" name="Nucleic Acids Res.">
        <title>The genome sequence of Salmonella enterica serovar Choleraesuis, a highly invasive and resistant zoonotic pathogen.</title>
        <authorList>
            <person name="Chiu C.-H."/>
            <person name="Tang P."/>
            <person name="Chu C."/>
            <person name="Hu S."/>
            <person name="Bao Q."/>
            <person name="Yu J."/>
            <person name="Chou Y.-Y."/>
            <person name="Wang H.-S."/>
            <person name="Lee Y.-S."/>
        </authorList>
    </citation>
    <scope>NUCLEOTIDE SEQUENCE [LARGE SCALE GENOMIC DNA]</scope>
    <source>
        <strain>SC-B67</strain>
    </source>
</reference>